<proteinExistence type="inferred from homology"/>
<evidence type="ECO:0000255" key="1">
    <source>
        <dbReference type="HAMAP-Rule" id="MF_01517"/>
    </source>
</evidence>
<accession>A4FFX3</accession>
<reference key="1">
    <citation type="journal article" date="2007" name="Nat. Biotechnol.">
        <title>Complete genome sequence of the erythromycin-producing bacterium Saccharopolyspora erythraea NRRL23338.</title>
        <authorList>
            <person name="Oliynyk M."/>
            <person name="Samborskyy M."/>
            <person name="Lester J.B."/>
            <person name="Mironenko T."/>
            <person name="Scott N."/>
            <person name="Dickens S."/>
            <person name="Haydock S.F."/>
            <person name="Leadlay P.F."/>
        </authorList>
    </citation>
    <scope>NUCLEOTIDE SEQUENCE [LARGE SCALE GENOMIC DNA]</scope>
    <source>
        <strain>ATCC 11635 / DSM 40517 / JCM 4748 / NBRC 13426 / NCIMB 8594 / NRRL 2338</strain>
    </source>
</reference>
<name>MDH_SACEN</name>
<dbReference type="EC" id="1.1.1.37" evidence="1"/>
<dbReference type="EMBL" id="AM420293">
    <property type="protein sequence ID" value="CAM02948.1"/>
    <property type="molecule type" value="Genomic_DNA"/>
</dbReference>
<dbReference type="RefSeq" id="WP_009946856.1">
    <property type="nucleotide sequence ID" value="NC_009142.1"/>
</dbReference>
<dbReference type="SMR" id="A4FFX3"/>
<dbReference type="STRING" id="405948.SACE_3674"/>
<dbReference type="KEGG" id="sen:SACE_3674"/>
<dbReference type="eggNOG" id="COG0039">
    <property type="taxonomic scope" value="Bacteria"/>
</dbReference>
<dbReference type="HOGENOM" id="CLU_040727_2_0_11"/>
<dbReference type="OrthoDB" id="9802969at2"/>
<dbReference type="Proteomes" id="UP000006728">
    <property type="component" value="Chromosome"/>
</dbReference>
<dbReference type="GO" id="GO:0030060">
    <property type="term" value="F:L-malate dehydrogenase (NAD+) activity"/>
    <property type="evidence" value="ECO:0007669"/>
    <property type="project" value="UniProtKB-UniRule"/>
</dbReference>
<dbReference type="GO" id="GO:0006108">
    <property type="term" value="P:malate metabolic process"/>
    <property type="evidence" value="ECO:0007669"/>
    <property type="project" value="InterPro"/>
</dbReference>
<dbReference type="GO" id="GO:0006099">
    <property type="term" value="P:tricarboxylic acid cycle"/>
    <property type="evidence" value="ECO:0007669"/>
    <property type="project" value="UniProtKB-UniRule"/>
</dbReference>
<dbReference type="CDD" id="cd01338">
    <property type="entry name" value="MDH_chloroplast-like"/>
    <property type="match status" value="1"/>
</dbReference>
<dbReference type="FunFam" id="3.40.50.720:FF:000010">
    <property type="entry name" value="Malate dehydrogenase"/>
    <property type="match status" value="1"/>
</dbReference>
<dbReference type="FunFam" id="3.90.110.10:FF:000002">
    <property type="entry name" value="Malate dehydrogenase"/>
    <property type="match status" value="1"/>
</dbReference>
<dbReference type="Gene3D" id="3.90.110.10">
    <property type="entry name" value="Lactate dehydrogenase/glycoside hydrolase, family 4, C-terminal"/>
    <property type="match status" value="1"/>
</dbReference>
<dbReference type="Gene3D" id="3.40.50.720">
    <property type="entry name" value="NAD(P)-binding Rossmann-like Domain"/>
    <property type="match status" value="1"/>
</dbReference>
<dbReference type="HAMAP" id="MF_01517">
    <property type="entry name" value="Malate_dehydrog_2"/>
    <property type="match status" value="1"/>
</dbReference>
<dbReference type="InterPro" id="IPR001557">
    <property type="entry name" value="L-lactate/malate_DH"/>
</dbReference>
<dbReference type="InterPro" id="IPR022383">
    <property type="entry name" value="Lactate/malate_DH_C"/>
</dbReference>
<dbReference type="InterPro" id="IPR001236">
    <property type="entry name" value="Lactate/malate_DH_N"/>
</dbReference>
<dbReference type="InterPro" id="IPR015955">
    <property type="entry name" value="Lactate_DH/Glyco_Ohase_4_C"/>
</dbReference>
<dbReference type="InterPro" id="IPR001252">
    <property type="entry name" value="Malate_DH_AS"/>
</dbReference>
<dbReference type="InterPro" id="IPR010945">
    <property type="entry name" value="Malate_DH_type2"/>
</dbReference>
<dbReference type="InterPro" id="IPR036291">
    <property type="entry name" value="NAD(P)-bd_dom_sf"/>
</dbReference>
<dbReference type="NCBIfam" id="TIGR01759">
    <property type="entry name" value="MalateDH-SF1"/>
    <property type="match status" value="1"/>
</dbReference>
<dbReference type="NCBIfam" id="NF003916">
    <property type="entry name" value="PRK05442.1"/>
    <property type="match status" value="1"/>
</dbReference>
<dbReference type="PANTHER" id="PTHR23382">
    <property type="entry name" value="MALATE DEHYDROGENASE"/>
    <property type="match status" value="1"/>
</dbReference>
<dbReference type="Pfam" id="PF02866">
    <property type="entry name" value="Ldh_1_C"/>
    <property type="match status" value="1"/>
</dbReference>
<dbReference type="Pfam" id="PF00056">
    <property type="entry name" value="Ldh_1_N"/>
    <property type="match status" value="1"/>
</dbReference>
<dbReference type="PIRSF" id="PIRSF000102">
    <property type="entry name" value="Lac_mal_DH"/>
    <property type="match status" value="1"/>
</dbReference>
<dbReference type="SUPFAM" id="SSF56327">
    <property type="entry name" value="LDH C-terminal domain-like"/>
    <property type="match status" value="1"/>
</dbReference>
<dbReference type="SUPFAM" id="SSF51735">
    <property type="entry name" value="NAD(P)-binding Rossmann-fold domains"/>
    <property type="match status" value="1"/>
</dbReference>
<dbReference type="PROSITE" id="PS00068">
    <property type="entry name" value="MDH"/>
    <property type="match status" value="1"/>
</dbReference>
<feature type="chain" id="PRO_0000294406" description="Malate dehydrogenase">
    <location>
        <begin position="1"/>
        <end position="328"/>
    </location>
</feature>
<feature type="active site" description="Proton acceptor" evidence="1">
    <location>
        <position position="188"/>
    </location>
</feature>
<feature type="binding site" evidence="1">
    <location>
        <begin position="12"/>
        <end position="18"/>
    </location>
    <ligand>
        <name>NAD(+)</name>
        <dbReference type="ChEBI" id="CHEBI:57540"/>
    </ligand>
</feature>
<feature type="binding site" evidence="1">
    <location>
        <position position="93"/>
    </location>
    <ligand>
        <name>substrate</name>
    </ligand>
</feature>
<feature type="binding site" evidence="1">
    <location>
        <position position="99"/>
    </location>
    <ligand>
        <name>substrate</name>
    </ligand>
</feature>
<feature type="binding site" evidence="1">
    <location>
        <position position="106"/>
    </location>
    <ligand>
        <name>NAD(+)</name>
        <dbReference type="ChEBI" id="CHEBI:57540"/>
    </ligand>
</feature>
<feature type="binding site" evidence="1">
    <location>
        <position position="113"/>
    </location>
    <ligand>
        <name>NAD(+)</name>
        <dbReference type="ChEBI" id="CHEBI:57540"/>
    </ligand>
</feature>
<feature type="binding site" evidence="1">
    <location>
        <begin position="130"/>
        <end position="132"/>
    </location>
    <ligand>
        <name>NAD(+)</name>
        <dbReference type="ChEBI" id="CHEBI:57540"/>
    </ligand>
</feature>
<feature type="binding site" evidence="1">
    <location>
        <position position="132"/>
    </location>
    <ligand>
        <name>substrate</name>
    </ligand>
</feature>
<feature type="binding site" evidence="1">
    <location>
        <position position="163"/>
    </location>
    <ligand>
        <name>substrate</name>
    </ligand>
</feature>
<keyword id="KW-0520">NAD</keyword>
<keyword id="KW-0560">Oxidoreductase</keyword>
<keyword id="KW-1185">Reference proteome</keyword>
<keyword id="KW-0816">Tricarboxylic acid cycle</keyword>
<sequence length="328" mass="34676">MTQAPVTVTVTGAAGQIGYALLFRIASGQLIGPDTPVRLRLLEIPQAVKAAEGTAMELDDCAFPLLQGIEVTDDARTAFDGTNVALLVGARPRTKGMERGDLLEANGGIFKPQGEAINAGAADDVRVLVVGNPANTNALIAQAHAPDVPAERFTAMTRLDHNRALTQLAQKLGVSVNDIKKLTIWGNHSATQYPDLFHAEVNGKVAAEQVDQAWLADTFIPTVAKRGAAIIEARGASSAASAANAAIDHIHTWVNGTPEGDWTSAAVVSDGSYGVPEGLISSFPVVARDGRYEIVQGLEIDEFSRQRIDASVNELSEERDAVRKLGLL</sequence>
<organism>
    <name type="scientific">Saccharopolyspora erythraea (strain ATCC 11635 / DSM 40517 / JCM 4748 / NBRC 13426 / NCIMB 8594 / NRRL 2338)</name>
    <dbReference type="NCBI Taxonomy" id="405948"/>
    <lineage>
        <taxon>Bacteria</taxon>
        <taxon>Bacillati</taxon>
        <taxon>Actinomycetota</taxon>
        <taxon>Actinomycetes</taxon>
        <taxon>Pseudonocardiales</taxon>
        <taxon>Pseudonocardiaceae</taxon>
        <taxon>Saccharopolyspora</taxon>
    </lineage>
</organism>
<gene>
    <name evidence="1" type="primary">mdh</name>
    <name type="ordered locus">SACE_3674</name>
</gene>
<comment type="function">
    <text evidence="1">Catalyzes the reversible oxidation of malate to oxaloacetate.</text>
</comment>
<comment type="catalytic activity">
    <reaction evidence="1">
        <text>(S)-malate + NAD(+) = oxaloacetate + NADH + H(+)</text>
        <dbReference type="Rhea" id="RHEA:21432"/>
        <dbReference type="ChEBI" id="CHEBI:15378"/>
        <dbReference type="ChEBI" id="CHEBI:15589"/>
        <dbReference type="ChEBI" id="CHEBI:16452"/>
        <dbReference type="ChEBI" id="CHEBI:57540"/>
        <dbReference type="ChEBI" id="CHEBI:57945"/>
        <dbReference type="EC" id="1.1.1.37"/>
    </reaction>
</comment>
<comment type="similarity">
    <text evidence="1">Belongs to the LDH/MDH superfamily. MDH type 2 family.</text>
</comment>
<protein>
    <recommendedName>
        <fullName evidence="1">Malate dehydrogenase</fullName>
        <ecNumber evidence="1">1.1.1.37</ecNumber>
    </recommendedName>
</protein>